<dbReference type="EC" id="1.97.1.4"/>
<dbReference type="EMBL" id="U00006">
    <property type="protein sequence ID" value="AAC43058.1"/>
    <property type="status" value="ALT_INIT"/>
    <property type="molecule type" value="Genomic_DNA"/>
</dbReference>
<dbReference type="EMBL" id="U00096">
    <property type="protein sequence ID" value="AAC76934.1"/>
    <property type="molecule type" value="Genomic_DNA"/>
</dbReference>
<dbReference type="EMBL" id="AP009048">
    <property type="protein sequence ID" value="BAE77359.1"/>
    <property type="molecule type" value="Genomic_DNA"/>
</dbReference>
<dbReference type="PIR" id="C65202">
    <property type="entry name" value="C65202"/>
</dbReference>
<dbReference type="RefSeq" id="NP_418387.3">
    <property type="nucleotide sequence ID" value="NC_000913.3"/>
</dbReference>
<dbReference type="RefSeq" id="WP_000204105.1">
    <property type="nucleotide sequence ID" value="NZ_SSZK01000014.1"/>
</dbReference>
<dbReference type="SMR" id="P32675"/>
<dbReference type="BioGRID" id="4263011">
    <property type="interactions" value="3"/>
</dbReference>
<dbReference type="FunCoup" id="P32675">
    <property type="interactions" value="268"/>
</dbReference>
<dbReference type="IntAct" id="P32675">
    <property type="interactions" value="3"/>
</dbReference>
<dbReference type="STRING" id="511145.b3952"/>
<dbReference type="PaxDb" id="511145-b3952"/>
<dbReference type="EnsemblBacteria" id="AAC76934">
    <property type="protein sequence ID" value="AAC76934"/>
    <property type="gene ID" value="b3952"/>
</dbReference>
<dbReference type="GeneID" id="948453"/>
<dbReference type="KEGG" id="ecj:JW3924"/>
<dbReference type="KEGG" id="eco:b3952"/>
<dbReference type="KEGG" id="ecoc:C3026_21355"/>
<dbReference type="PATRIC" id="fig|1411691.4.peg.2753"/>
<dbReference type="EchoBASE" id="EB1855"/>
<dbReference type="eggNOG" id="COG1180">
    <property type="taxonomic scope" value="Bacteria"/>
</dbReference>
<dbReference type="HOGENOM" id="CLU_058969_0_0_6"/>
<dbReference type="InParanoid" id="P32675"/>
<dbReference type="OMA" id="HRCPWCA"/>
<dbReference type="OrthoDB" id="9782387at2"/>
<dbReference type="PhylomeDB" id="P32675"/>
<dbReference type="BioCyc" id="EcoCyc:EG11911-MONOMER"/>
<dbReference type="PRO" id="PR:P32675"/>
<dbReference type="Proteomes" id="UP000000625">
    <property type="component" value="Chromosome"/>
</dbReference>
<dbReference type="GO" id="GO:0005737">
    <property type="term" value="C:cytoplasm"/>
    <property type="evidence" value="ECO:0007669"/>
    <property type="project" value="UniProtKB-SubCell"/>
</dbReference>
<dbReference type="GO" id="GO:0051539">
    <property type="term" value="F:4 iron, 4 sulfur cluster binding"/>
    <property type="evidence" value="ECO:0007669"/>
    <property type="project" value="UniProtKB-KW"/>
</dbReference>
<dbReference type="GO" id="GO:0043365">
    <property type="term" value="F:[formate-C-acetyltransferase]-activating enzyme activity"/>
    <property type="evidence" value="ECO:0007669"/>
    <property type="project" value="UniProtKB-EC"/>
</dbReference>
<dbReference type="GO" id="GO:0046872">
    <property type="term" value="F:metal ion binding"/>
    <property type="evidence" value="ECO:0007669"/>
    <property type="project" value="UniProtKB-KW"/>
</dbReference>
<dbReference type="GO" id="GO:0006006">
    <property type="term" value="P:glucose metabolic process"/>
    <property type="evidence" value="ECO:0007669"/>
    <property type="project" value="UniProtKB-KW"/>
</dbReference>
<dbReference type="CDD" id="cd01335">
    <property type="entry name" value="Radical_SAM"/>
    <property type="match status" value="1"/>
</dbReference>
<dbReference type="Gene3D" id="3.20.20.70">
    <property type="entry name" value="Aldolase class I"/>
    <property type="match status" value="1"/>
</dbReference>
<dbReference type="InterPro" id="IPR017896">
    <property type="entry name" value="4Fe4S_Fe-S-bd"/>
</dbReference>
<dbReference type="InterPro" id="IPR013785">
    <property type="entry name" value="Aldolase_TIM"/>
</dbReference>
<dbReference type="InterPro" id="IPR040074">
    <property type="entry name" value="BssD/PflA/YjjW"/>
</dbReference>
<dbReference type="InterPro" id="IPR034457">
    <property type="entry name" value="Organic_radical-activating"/>
</dbReference>
<dbReference type="InterPro" id="IPR012839">
    <property type="entry name" value="Organic_radical_activase"/>
</dbReference>
<dbReference type="InterPro" id="IPR001989">
    <property type="entry name" value="Radical_activat_CS"/>
</dbReference>
<dbReference type="InterPro" id="IPR007197">
    <property type="entry name" value="rSAM"/>
</dbReference>
<dbReference type="NCBIfam" id="NF007483">
    <property type="entry name" value="PRK10076.1"/>
    <property type="match status" value="1"/>
</dbReference>
<dbReference type="PANTHER" id="PTHR30352:SF4">
    <property type="entry name" value="PYRUVATE FORMATE-LYASE 2-ACTIVATING ENZYME"/>
    <property type="match status" value="1"/>
</dbReference>
<dbReference type="PANTHER" id="PTHR30352">
    <property type="entry name" value="PYRUVATE FORMATE-LYASE-ACTIVATING ENZYME"/>
    <property type="match status" value="1"/>
</dbReference>
<dbReference type="Pfam" id="PF13353">
    <property type="entry name" value="Fer4_12"/>
    <property type="match status" value="1"/>
</dbReference>
<dbReference type="Pfam" id="PF04055">
    <property type="entry name" value="Radical_SAM"/>
    <property type="match status" value="1"/>
</dbReference>
<dbReference type="PIRSF" id="PIRSF000371">
    <property type="entry name" value="PFL_act_enz"/>
    <property type="match status" value="1"/>
</dbReference>
<dbReference type="SFLD" id="SFLDG01118">
    <property type="entry name" value="activating_enzymes__group_2"/>
    <property type="match status" value="1"/>
</dbReference>
<dbReference type="SFLD" id="SFLDS00029">
    <property type="entry name" value="Radical_SAM"/>
    <property type="match status" value="1"/>
</dbReference>
<dbReference type="SUPFAM" id="SSF54862">
    <property type="entry name" value="4Fe-4S ferredoxins"/>
    <property type="match status" value="1"/>
</dbReference>
<dbReference type="SUPFAM" id="SSF102114">
    <property type="entry name" value="Radical SAM enzymes"/>
    <property type="match status" value="1"/>
</dbReference>
<dbReference type="PROSITE" id="PS51379">
    <property type="entry name" value="4FE4S_FER_2"/>
    <property type="match status" value="1"/>
</dbReference>
<dbReference type="PROSITE" id="PS01087">
    <property type="entry name" value="RADICAL_ACTIVATING"/>
    <property type="match status" value="1"/>
</dbReference>
<dbReference type="PROSITE" id="PS51918">
    <property type="entry name" value="RADICAL_SAM"/>
    <property type="match status" value="1"/>
</dbReference>
<keyword id="KW-0004">4Fe-4S</keyword>
<keyword id="KW-0119">Carbohydrate metabolism</keyword>
<keyword id="KW-0963">Cytoplasm</keyword>
<keyword id="KW-0313">Glucose metabolism</keyword>
<keyword id="KW-0408">Iron</keyword>
<keyword id="KW-0411">Iron-sulfur</keyword>
<keyword id="KW-0479">Metal-binding</keyword>
<keyword id="KW-0560">Oxidoreductase</keyword>
<keyword id="KW-1185">Reference proteome</keyword>
<keyword id="KW-0949">S-adenosyl-L-methionine</keyword>
<sequence>MTSSAGQRISCNVVETRRDDVARIFNIQRYSLNDGEGIRTVVFFKGCPHLCPWCANPESISGKIQTVRREAKCLHCAKCLRDADECPSGAFERIGRDISLDALEREVMKDDIFFRTSGGGVTLSGGEVLMQAEFATRFLQRLRLWGVSCAIETAGDAPASKLLPLAKLCDEVLFDLKIMDATQARDVVKMNLPRVLENLRLLVSEGVNVIPRLPLIPGFTLSRENMQQALDVLIPLNIRQIHLLPFHQYGEPKYRLLGKTWSMKEVPAPSSADVATMREMAERAGLQVTVGG</sequence>
<accession>P32675</accession>
<accession>Q2M8P7</accession>
<gene>
    <name type="primary">pflC</name>
    <name type="synonym">yijM</name>
    <name type="ordered locus">b3952</name>
    <name type="ordered locus">JW3924</name>
</gene>
<name>PFLC_ECOLI</name>
<evidence type="ECO:0000250" key="1"/>
<evidence type="ECO:0000250" key="2">
    <source>
        <dbReference type="UniProtKB" id="P0A9N4"/>
    </source>
</evidence>
<evidence type="ECO:0000255" key="3">
    <source>
        <dbReference type="PROSITE-ProRule" id="PRU00711"/>
    </source>
</evidence>
<evidence type="ECO:0000255" key="4">
    <source>
        <dbReference type="PROSITE-ProRule" id="PRU01266"/>
    </source>
</evidence>
<evidence type="ECO:0000305" key="5"/>
<feature type="chain" id="PRO_0000200527" description="Pyruvate formate-lyase 2-activating enzyme">
    <location>
        <begin position="1"/>
        <end position="292"/>
    </location>
</feature>
<feature type="domain" description="Radical SAM core" evidence="4">
    <location>
        <begin position="33"/>
        <end position="287"/>
    </location>
</feature>
<feature type="domain" description="4Fe-4S ferredoxin-type" evidence="3">
    <location>
        <begin position="62"/>
        <end position="96"/>
    </location>
</feature>
<feature type="binding site" evidence="2">
    <location>
        <position position="47"/>
    </location>
    <ligand>
        <name>[4Fe-4S] cluster</name>
        <dbReference type="ChEBI" id="CHEBI:49883"/>
        <note>4Fe-4S-S-AdoMet</note>
    </ligand>
</feature>
<feature type="binding site" evidence="2">
    <location>
        <position position="51"/>
    </location>
    <ligand>
        <name>[4Fe-4S] cluster</name>
        <dbReference type="ChEBI" id="CHEBI:49883"/>
        <note>4Fe-4S-S-AdoMet</note>
    </ligand>
</feature>
<feature type="binding site" evidence="2">
    <location>
        <begin position="53"/>
        <end position="55"/>
    </location>
    <ligand>
        <name>S-adenosyl-L-methionine</name>
        <dbReference type="ChEBI" id="CHEBI:59789"/>
    </ligand>
</feature>
<feature type="binding site" evidence="2">
    <location>
        <position position="54"/>
    </location>
    <ligand>
        <name>[4Fe-4S] cluster</name>
        <dbReference type="ChEBI" id="CHEBI:49883"/>
        <note>4Fe-4S-S-AdoMet</note>
    </ligand>
</feature>
<feature type="binding site" evidence="2">
    <location>
        <position position="126"/>
    </location>
    <ligand>
        <name>S-adenosyl-L-methionine</name>
        <dbReference type="ChEBI" id="CHEBI:59789"/>
    </ligand>
</feature>
<feature type="binding site" evidence="2">
    <location>
        <begin position="175"/>
        <end position="177"/>
    </location>
    <ligand>
        <name>S-adenosyl-L-methionine</name>
        <dbReference type="ChEBI" id="CHEBI:59789"/>
    </ligand>
</feature>
<feature type="binding site" evidence="2">
    <location>
        <position position="247"/>
    </location>
    <ligand>
        <name>S-adenosyl-L-methionine</name>
        <dbReference type="ChEBI" id="CHEBI:59789"/>
    </ligand>
</feature>
<protein>
    <recommendedName>
        <fullName>Pyruvate formate-lyase 2-activating enzyme</fullName>
        <ecNumber>1.97.1.4</ecNumber>
    </recommendedName>
    <alternativeName>
        <fullName>Formate-C-acetyltransferase-activating enzyme 2</fullName>
    </alternativeName>
    <alternativeName>
        <fullName>PFL-activating enzyme 2</fullName>
    </alternativeName>
</protein>
<reference key="1">
    <citation type="journal article" date="1993" name="Nucleic Acids Res.">
        <title>Analysis of the Escherichia coli genome. IV. DNA sequence of the region from 89.2 to 92.8 minutes.</title>
        <authorList>
            <person name="Blattner F.R."/>
            <person name="Burland V.D."/>
            <person name="Plunkett G. III"/>
            <person name="Sofia H.J."/>
            <person name="Daniels D.L."/>
        </authorList>
    </citation>
    <scope>NUCLEOTIDE SEQUENCE [LARGE SCALE GENOMIC DNA]</scope>
    <source>
        <strain>K12 / MG1655 / ATCC 47076</strain>
    </source>
</reference>
<reference key="2">
    <citation type="journal article" date="1997" name="Science">
        <title>The complete genome sequence of Escherichia coli K-12.</title>
        <authorList>
            <person name="Blattner F.R."/>
            <person name="Plunkett G. III"/>
            <person name="Bloch C.A."/>
            <person name="Perna N.T."/>
            <person name="Burland V."/>
            <person name="Riley M."/>
            <person name="Collado-Vides J."/>
            <person name="Glasner J.D."/>
            <person name="Rode C.K."/>
            <person name="Mayhew G.F."/>
            <person name="Gregor J."/>
            <person name="Davis N.W."/>
            <person name="Kirkpatrick H.A."/>
            <person name="Goeden M.A."/>
            <person name="Rose D.J."/>
            <person name="Mau B."/>
            <person name="Shao Y."/>
        </authorList>
    </citation>
    <scope>NUCLEOTIDE SEQUENCE [LARGE SCALE GENOMIC DNA]</scope>
    <source>
        <strain>K12 / MG1655 / ATCC 47076</strain>
    </source>
</reference>
<reference key="3">
    <citation type="journal article" date="2006" name="Mol. Syst. Biol.">
        <title>Highly accurate genome sequences of Escherichia coli K-12 strains MG1655 and W3110.</title>
        <authorList>
            <person name="Hayashi K."/>
            <person name="Morooka N."/>
            <person name="Yamamoto Y."/>
            <person name="Fujita K."/>
            <person name="Isono K."/>
            <person name="Choi S."/>
            <person name="Ohtsubo E."/>
            <person name="Baba T."/>
            <person name="Wanner B.L."/>
            <person name="Mori H."/>
            <person name="Horiuchi T."/>
        </authorList>
    </citation>
    <scope>NUCLEOTIDE SEQUENCE [LARGE SCALE GENOMIC DNA]</scope>
    <source>
        <strain>K12 / W3110 / ATCC 27325 / DSM 5911</strain>
    </source>
</reference>
<reference key="4">
    <citation type="journal article" date="1995" name="Microbiology">
        <title>Novel phosphotransferase system genes revealed by bacterial genome analysis -- a gene cluster encoding a unique Enzyme I and the proteins of a fructose-like permease system.</title>
        <authorList>
            <person name="Reizer J."/>
            <person name="Reizer A."/>
            <person name="Saier M.H. Jr."/>
        </authorList>
    </citation>
    <scope>DISCUSSION OF SEQUENCE</scope>
</reference>
<proteinExistence type="inferred from homology"/>
<organism>
    <name type="scientific">Escherichia coli (strain K12)</name>
    <dbReference type="NCBI Taxonomy" id="83333"/>
    <lineage>
        <taxon>Bacteria</taxon>
        <taxon>Pseudomonadati</taxon>
        <taxon>Pseudomonadota</taxon>
        <taxon>Gammaproteobacteria</taxon>
        <taxon>Enterobacterales</taxon>
        <taxon>Enterobacteriaceae</taxon>
        <taxon>Escherichia</taxon>
    </lineage>
</organism>
<comment type="function">
    <text evidence="1">Activation of pyruvate formate-lyase 2 under anaerobic conditions by generation of an organic free radical, using S-adenosylmethionine and reduced flavodoxin as cosubstrates to produce 5'-deoxy-adenosine.</text>
</comment>
<comment type="catalytic activity">
    <reaction>
        <text>glycyl-[formate C-acetyltransferase] + reduced [flavodoxin] + S-adenosyl-L-methionine = glycin-2-yl radical-[formate C-acetyltransferase] + semiquinone [flavodoxin] + 5'-deoxyadenosine + L-methionine + H(+)</text>
        <dbReference type="Rhea" id="RHEA:19225"/>
        <dbReference type="Rhea" id="RHEA-COMP:10622"/>
        <dbReference type="Rhea" id="RHEA-COMP:12190"/>
        <dbReference type="Rhea" id="RHEA-COMP:12191"/>
        <dbReference type="Rhea" id="RHEA-COMP:14480"/>
        <dbReference type="ChEBI" id="CHEBI:15378"/>
        <dbReference type="ChEBI" id="CHEBI:17319"/>
        <dbReference type="ChEBI" id="CHEBI:29947"/>
        <dbReference type="ChEBI" id="CHEBI:32722"/>
        <dbReference type="ChEBI" id="CHEBI:57618"/>
        <dbReference type="ChEBI" id="CHEBI:57844"/>
        <dbReference type="ChEBI" id="CHEBI:59789"/>
        <dbReference type="ChEBI" id="CHEBI:140311"/>
        <dbReference type="EC" id="1.97.1.4"/>
    </reaction>
</comment>
<comment type="cofactor">
    <cofactor evidence="1">
        <name>[4Fe-4S] cluster</name>
        <dbReference type="ChEBI" id="CHEBI:49883"/>
    </cofactor>
    <text evidence="1">Binds 1 [4Fe-4S] cluster. The cluster is coordinated with 3 cysteines and an exchangeable S-adenosyl-L-methionine.</text>
</comment>
<comment type="subcellular location">
    <subcellularLocation>
        <location evidence="1">Cytoplasm</location>
    </subcellularLocation>
</comment>
<comment type="similarity">
    <text evidence="5">Belongs to the organic radical-activating enzymes family.</text>
</comment>
<comment type="sequence caution" evidence="5">
    <conflict type="erroneous initiation">
        <sequence resource="EMBL-CDS" id="AAC43058"/>
    </conflict>
</comment>